<accession>O18315</accession>
<proteinExistence type="inferred from homology"/>
<protein>
    <recommendedName>
        <fullName>Rhodopsin</fullName>
    </recommendedName>
</protein>
<reference key="1">
    <citation type="journal article" date="1997" name="Nature">
        <title>Rhodopsin evolution in the dark.</title>
        <authorList>
            <person name="Crandall K.A."/>
            <person name="Hillis D.M."/>
        </authorList>
    </citation>
    <scope>NUCLEOTIDE SEQUENCE [GENOMIC DNA]</scope>
</reference>
<keyword id="KW-1003">Cell membrane</keyword>
<keyword id="KW-0966">Cell projection</keyword>
<keyword id="KW-0157">Chromophore</keyword>
<keyword id="KW-1015">Disulfide bond</keyword>
<keyword id="KW-0297">G-protein coupled receptor</keyword>
<keyword id="KW-0472">Membrane</keyword>
<keyword id="KW-0597">Phosphoprotein</keyword>
<keyword id="KW-0600">Photoreceptor protein</keyword>
<keyword id="KW-0675">Receptor</keyword>
<keyword id="KW-0681">Retinal protein</keyword>
<keyword id="KW-0716">Sensory transduction</keyword>
<keyword id="KW-0807">Transducer</keyword>
<keyword id="KW-0812">Transmembrane</keyword>
<keyword id="KW-1133">Transmembrane helix</keyword>
<keyword id="KW-0844">Vision</keyword>
<sequence>LHMIHLHWYQYPPMNPMMYPLLLVFMLITGILCLAGNFVTIWVFMNTKSLRTPANLLVVNLAMSDFLMMFTMFPPMMVTCYYHTWTLGATFCQVYAFLGNLCGCASIWTMVFITFDRYNVIVKGVAGEPLSTKKASLWILTIWILSITWCIAPFFGWNRYVPEGNTGCGTDYLSEDILSRSYLYIYSTWVYFLPLAITIYCHVFIIKAVAAHEKGMRDQAKKMGIKSLRNEEAQKTSAECRLAKIAMTTVALWFIAWTPYLLINWVGMFARSYLSPVYTIWGYVFAKANAVYNPIVYAIS</sequence>
<feature type="chain" id="PRO_0000197739" description="Rhodopsin">
    <location>
        <begin position="1" status="less than"/>
        <end position="300" status="greater than"/>
    </location>
</feature>
<feature type="topological domain" description="Extracellular" evidence="5">
    <location>
        <begin position="1" status="less than"/>
        <end position="18"/>
    </location>
</feature>
<feature type="transmembrane region" description="Helical; Name=1" evidence="1">
    <location>
        <begin position="19"/>
        <end position="43"/>
    </location>
</feature>
<feature type="topological domain" description="Cytoplasmic" evidence="5">
    <location>
        <begin position="44"/>
        <end position="55"/>
    </location>
</feature>
<feature type="transmembrane region" description="Helical; Name=2" evidence="1">
    <location>
        <begin position="56"/>
        <end position="78"/>
    </location>
</feature>
<feature type="topological domain" description="Extracellular" evidence="5">
    <location>
        <begin position="79"/>
        <end position="92"/>
    </location>
</feature>
<feature type="transmembrane region" description="Helical; Name=3" evidence="1">
    <location>
        <begin position="93"/>
        <end position="115"/>
    </location>
</feature>
<feature type="topological domain" description="Cytoplasmic" evidence="5">
    <location>
        <begin position="116"/>
        <end position="134"/>
    </location>
</feature>
<feature type="transmembrane region" description="Helical; Name=4" evidence="1">
    <location>
        <begin position="135"/>
        <end position="155"/>
    </location>
</feature>
<feature type="topological domain" description="Extracellular" evidence="5">
    <location>
        <begin position="156"/>
        <end position="181"/>
    </location>
</feature>
<feature type="transmembrane region" description="Helical; Name=5" evidence="1">
    <location>
        <begin position="182"/>
        <end position="203"/>
    </location>
</feature>
<feature type="topological domain" description="Cytoplasmic" evidence="5">
    <location>
        <begin position="204"/>
        <end position="244"/>
    </location>
</feature>
<feature type="transmembrane region" description="Helical; Name=6" evidence="1">
    <location>
        <begin position="245"/>
        <end position="266"/>
    </location>
</feature>
<feature type="topological domain" description="Extracellular" evidence="5">
    <location>
        <begin position="267"/>
        <end position="277"/>
    </location>
</feature>
<feature type="transmembrane region" description="Helical; Name=7" evidence="1">
    <location>
        <begin position="278"/>
        <end position="299"/>
    </location>
</feature>
<feature type="short sequence motif" description="'Ionic lock' involved in activated form stabilization" evidence="1">
    <location>
        <begin position="116"/>
        <end position="118"/>
    </location>
</feature>
<feature type="modified residue" description="N6-(retinylidene)lysine" evidence="1">
    <location>
        <position position="287"/>
    </location>
</feature>
<feature type="disulfide bond" evidence="4">
    <location>
        <begin position="92"/>
        <end position="168"/>
    </location>
</feature>
<feature type="non-terminal residue">
    <location>
        <position position="1"/>
    </location>
</feature>
<feature type="non-terminal residue">
    <location>
        <position position="300"/>
    </location>
</feature>
<comment type="function">
    <text evidence="3">Photoreceptor required for image-forming vision at low light intensity. Can use both retinal and 3-dehydroretinal as visual pigment. Light-induced isomerization of 11-cis to all-trans retinal triggers a conformational change that activates signaling via G-proteins. Signaling via GNAQ probably mediates the activation of phospholipase C.</text>
</comment>
<comment type="subunit">
    <text evidence="3">Homodimer. Interacts with GNAQ.</text>
</comment>
<comment type="subcellular location">
    <subcellularLocation>
        <location evidence="3">Cell projection</location>
        <location evidence="3">Rhabdomere membrane</location>
        <topology evidence="2">Multi-pass membrane protein</topology>
    </subcellularLocation>
</comment>
<comment type="PTM">
    <text evidence="1">Contains one covalently linked retinal chromophore.</text>
</comment>
<comment type="similarity">
    <text evidence="4">Belongs to the G-protein coupled receptor 1 family. Opsin subfamily.</text>
</comment>
<dbReference type="EMBL" id="AF005386">
    <property type="protein sequence ID" value="AAB63377.1"/>
    <property type="molecule type" value="Genomic_DNA"/>
</dbReference>
<dbReference type="SMR" id="O18315"/>
<dbReference type="GO" id="GO:0042995">
    <property type="term" value="C:cell projection"/>
    <property type="evidence" value="ECO:0007669"/>
    <property type="project" value="UniProtKB-KW"/>
</dbReference>
<dbReference type="GO" id="GO:0005886">
    <property type="term" value="C:plasma membrane"/>
    <property type="evidence" value="ECO:0000250"/>
    <property type="project" value="UniProtKB"/>
</dbReference>
<dbReference type="GO" id="GO:0004930">
    <property type="term" value="F:G protein-coupled receptor activity"/>
    <property type="evidence" value="ECO:0007669"/>
    <property type="project" value="UniProtKB-KW"/>
</dbReference>
<dbReference type="GO" id="GO:0009881">
    <property type="term" value="F:photoreceptor activity"/>
    <property type="evidence" value="ECO:0007669"/>
    <property type="project" value="UniProtKB-KW"/>
</dbReference>
<dbReference type="GO" id="GO:0007602">
    <property type="term" value="P:phototransduction"/>
    <property type="evidence" value="ECO:0007669"/>
    <property type="project" value="UniProtKB-KW"/>
</dbReference>
<dbReference type="GO" id="GO:0007601">
    <property type="term" value="P:visual perception"/>
    <property type="evidence" value="ECO:0007669"/>
    <property type="project" value="UniProtKB-KW"/>
</dbReference>
<dbReference type="FunFam" id="1.20.1070.10:FF:000044">
    <property type="entry name" value="Opsin, ultraviolet-sensitive"/>
    <property type="match status" value="1"/>
</dbReference>
<dbReference type="Gene3D" id="1.20.1070.10">
    <property type="entry name" value="Rhodopsin 7-helix transmembrane proteins"/>
    <property type="match status" value="1"/>
</dbReference>
<dbReference type="InterPro" id="IPR050125">
    <property type="entry name" value="GPCR_opsins"/>
</dbReference>
<dbReference type="InterPro" id="IPR000276">
    <property type="entry name" value="GPCR_Rhodpsn"/>
</dbReference>
<dbReference type="InterPro" id="IPR017452">
    <property type="entry name" value="GPCR_Rhodpsn_7TM"/>
</dbReference>
<dbReference type="InterPro" id="IPR001760">
    <property type="entry name" value="Opsin"/>
</dbReference>
<dbReference type="InterPro" id="IPR001391">
    <property type="entry name" value="Opsin_lateye"/>
</dbReference>
<dbReference type="InterPro" id="IPR027430">
    <property type="entry name" value="Retinal_BS"/>
</dbReference>
<dbReference type="PANTHER" id="PTHR24240">
    <property type="entry name" value="OPSIN"/>
    <property type="match status" value="1"/>
</dbReference>
<dbReference type="Pfam" id="PF00001">
    <property type="entry name" value="7tm_1"/>
    <property type="match status" value="1"/>
</dbReference>
<dbReference type="PRINTS" id="PR00237">
    <property type="entry name" value="GPCRRHODOPSN"/>
</dbReference>
<dbReference type="PRINTS" id="PR00238">
    <property type="entry name" value="OPSIN"/>
</dbReference>
<dbReference type="PRINTS" id="PR00578">
    <property type="entry name" value="OPSINLTRLEYE"/>
</dbReference>
<dbReference type="SUPFAM" id="SSF81321">
    <property type="entry name" value="Family A G protein-coupled receptor-like"/>
    <property type="match status" value="1"/>
</dbReference>
<dbReference type="PROSITE" id="PS00237">
    <property type="entry name" value="G_PROTEIN_RECEP_F1_1"/>
    <property type="match status" value="1"/>
</dbReference>
<dbReference type="PROSITE" id="PS50262">
    <property type="entry name" value="G_PROTEIN_RECEP_F1_2"/>
    <property type="match status" value="1"/>
</dbReference>
<dbReference type="PROSITE" id="PS00238">
    <property type="entry name" value="OPSIN"/>
    <property type="match status" value="1"/>
</dbReference>
<organism>
    <name type="scientific">Cambarus maculatus</name>
    <name type="common">Freckled crayfish</name>
    <dbReference type="NCBI Taxonomy" id="61489"/>
    <lineage>
        <taxon>Eukaryota</taxon>
        <taxon>Metazoa</taxon>
        <taxon>Ecdysozoa</taxon>
        <taxon>Arthropoda</taxon>
        <taxon>Crustacea</taxon>
        <taxon>Multicrustacea</taxon>
        <taxon>Malacostraca</taxon>
        <taxon>Eumalacostraca</taxon>
        <taxon>Eucarida</taxon>
        <taxon>Decapoda</taxon>
        <taxon>Pleocyemata</taxon>
        <taxon>Astacidea</taxon>
        <taxon>Astacoidea</taxon>
        <taxon>Cambaridae</taxon>
        <taxon>Cambarus</taxon>
    </lineage>
</organism>
<gene>
    <name type="primary">RHO</name>
</gene>
<name>OPSD_CAMMA</name>
<evidence type="ECO:0000250" key="1">
    <source>
        <dbReference type="UniProtKB" id="P02699"/>
    </source>
</evidence>
<evidence type="ECO:0000250" key="2">
    <source>
        <dbReference type="UniProtKB" id="P31356"/>
    </source>
</evidence>
<evidence type="ECO:0000250" key="3">
    <source>
        <dbReference type="UniProtKB" id="P35356"/>
    </source>
</evidence>
<evidence type="ECO:0000255" key="4">
    <source>
        <dbReference type="PROSITE-ProRule" id="PRU00521"/>
    </source>
</evidence>
<evidence type="ECO:0000305" key="5"/>